<keyword id="KW-0150">Chloroplast</keyword>
<keyword id="KW-0472">Membrane</keyword>
<keyword id="KW-0602">Photosynthesis</keyword>
<keyword id="KW-0604">Photosystem II</keyword>
<keyword id="KW-0934">Plastid</keyword>
<keyword id="KW-0674">Reaction center</keyword>
<keyword id="KW-0793">Thylakoid</keyword>
<keyword id="KW-0812">Transmembrane</keyword>
<keyword id="KW-1133">Transmembrane helix</keyword>
<proteinExistence type="inferred from homology"/>
<organism>
    <name type="scientific">Ipomoea obscura</name>
    <name type="common">Obscure morning glory</name>
    <name type="synonym">Convolvulus obscurus</name>
    <dbReference type="NCBI Taxonomy" id="89652"/>
    <lineage>
        <taxon>Eukaryota</taxon>
        <taxon>Viridiplantae</taxon>
        <taxon>Streptophyta</taxon>
        <taxon>Embryophyta</taxon>
        <taxon>Tracheophyta</taxon>
        <taxon>Spermatophyta</taxon>
        <taxon>Magnoliopsida</taxon>
        <taxon>eudicotyledons</taxon>
        <taxon>Gunneridae</taxon>
        <taxon>Pentapetalae</taxon>
        <taxon>asterids</taxon>
        <taxon>lamiids</taxon>
        <taxon>Solanales</taxon>
        <taxon>Convolvulaceae</taxon>
        <taxon>Ipomoeeae</taxon>
        <taxon>Ipomoea</taxon>
    </lineage>
</organism>
<evidence type="ECO:0000255" key="1">
    <source>
        <dbReference type="HAMAP-Rule" id="MF_01317"/>
    </source>
</evidence>
<protein>
    <recommendedName>
        <fullName evidence="1">Photosystem II reaction center protein L</fullName>
        <shortName evidence="1">PSII-L</shortName>
    </recommendedName>
</protein>
<accession>Q7H8I7</accession>
<gene>
    <name evidence="1" type="primary">psbL</name>
</gene>
<geneLocation type="chloroplast"/>
<feature type="chain" id="PRO_0000219729" description="Photosystem II reaction center protein L">
    <location>
        <begin position="1"/>
        <end position="38"/>
    </location>
</feature>
<feature type="transmembrane region" description="Helical" evidence="1">
    <location>
        <begin position="17"/>
        <end position="37"/>
    </location>
</feature>
<reference key="1">
    <citation type="journal article" date="2002" name="Am. J. Bot.">
        <title>Monophyly of the Convolvulaceae and circumscription of their major lineages based on DNA sequences of multiple chloroplast loci.</title>
        <authorList>
            <person name="Stefanovic S."/>
            <person name="Krueger L."/>
            <person name="Olmstead R.G."/>
        </authorList>
        <dbReference type="AGRICOLA" id="IND23320510"/>
    </citation>
    <scope>NUCLEOTIDE SEQUENCE [GENOMIC DNA]</scope>
</reference>
<dbReference type="EMBL" id="AY100866">
    <property type="protein sequence ID" value="AAM55587.1"/>
    <property type="molecule type" value="Genomic_DNA"/>
</dbReference>
<dbReference type="SMR" id="Q7H8I7"/>
<dbReference type="GO" id="GO:0009535">
    <property type="term" value="C:chloroplast thylakoid membrane"/>
    <property type="evidence" value="ECO:0007669"/>
    <property type="project" value="UniProtKB-SubCell"/>
</dbReference>
<dbReference type="GO" id="GO:0009539">
    <property type="term" value="C:photosystem II reaction center"/>
    <property type="evidence" value="ECO:0007669"/>
    <property type="project" value="InterPro"/>
</dbReference>
<dbReference type="GO" id="GO:0015979">
    <property type="term" value="P:photosynthesis"/>
    <property type="evidence" value="ECO:0007669"/>
    <property type="project" value="UniProtKB-UniRule"/>
</dbReference>
<dbReference type="HAMAP" id="MF_01317">
    <property type="entry name" value="PSII_PsbL"/>
    <property type="match status" value="1"/>
</dbReference>
<dbReference type="InterPro" id="IPR003372">
    <property type="entry name" value="PSII_PsbL"/>
</dbReference>
<dbReference type="InterPro" id="IPR037266">
    <property type="entry name" value="PSII_PsbL_sf"/>
</dbReference>
<dbReference type="NCBIfam" id="NF001972">
    <property type="entry name" value="PRK00753.1"/>
    <property type="match status" value="1"/>
</dbReference>
<dbReference type="Pfam" id="PF02419">
    <property type="entry name" value="PsbL"/>
    <property type="match status" value="1"/>
</dbReference>
<dbReference type="SUPFAM" id="SSF161017">
    <property type="entry name" value="Photosystem II reaction center protein L, PsbL"/>
    <property type="match status" value="1"/>
</dbReference>
<sequence>MTQSNPNEQNVELNRTSLYWGLLLIFVLAVLFSNYFFN</sequence>
<name>PSBL_IPOOB</name>
<comment type="function">
    <text evidence="1">One of the components of the core complex of photosystem II (PSII). PSII is a light-driven water:plastoquinone oxidoreductase that uses light energy to abstract electrons from H(2)O, generating O(2) and a proton gradient subsequently used for ATP formation. It consists of a core antenna complex that captures photons, and an electron transfer chain that converts photonic excitation into a charge separation. This subunit is found at the monomer-monomer interface and is required for correct PSII assembly and/or dimerization.</text>
</comment>
<comment type="subunit">
    <text evidence="1">PSII is composed of 1 copy each of membrane proteins PsbA, PsbB, PsbC, PsbD, PsbE, PsbF, PsbH, PsbI, PsbJ, PsbK, PsbL, PsbM, PsbT, PsbX, PsbY, PsbZ, Psb30/Ycf12, at least 3 peripheral proteins of the oxygen-evolving complex and a large number of cofactors. It forms dimeric complexes.</text>
</comment>
<comment type="subcellular location">
    <subcellularLocation>
        <location evidence="1">Plastid</location>
        <location evidence="1">Chloroplast thylakoid membrane</location>
        <topology evidence="1">Single-pass membrane protein</topology>
    </subcellularLocation>
</comment>
<comment type="similarity">
    <text evidence="1">Belongs to the PsbL family.</text>
</comment>